<sequence>MRVLAVATPALGHLFPAVPLLWALRARGDEVLVVTGGDALRVAEAGLPVVDALPGETLTTLFGAYQETDPAFFVALRRSPMTTLRDLAPVLAYLAGRLLEPARRAAERWRPDAILATHGQAAGAVVAAEHGIPLVEHGFGFVRSDGAQEAVRQLLAERLGPAGSEPPPERYFLDIAVPSMTSAIEGMSLRAVPYNGGAVLPLSGASVGGRPPRPRVLVTAGTQLLHTHGAGALAWLPEVAAGHEAEFLLAAGGADLRDLGRLPPHVRVLDWTPLATVLPTCSAVVHHGGSGTTLAALAAGVPQLVSPALADNHINARAVADRGAGLETAVPDATTLTALLREPAFAKAAREVADELRSLPAPADVAARLHTAFGLPTTQGDA</sequence>
<reference key="1">
    <citation type="journal article" date="2001" name="Chem. Biol.">
        <title>Identification of a sugar flexible glycosyltransferase from Streptomyces olivaceus, the producer of the antitumor polyketide elloramycin.</title>
        <authorList>
            <person name="Blanco G."/>
            <person name="Patallo E.P."/>
            <person name="Brana A.F."/>
            <person name="Trefzer A."/>
            <person name="Bechthold A."/>
            <person name="Rohr J."/>
            <person name="Mendez C."/>
            <person name="Salas J.A."/>
        </authorList>
    </citation>
    <scope>NUCLEOTIDE SEQUENCE [GENOMIC DNA]</scope>
    <scope>FUNCTION</scope>
    <scope>CATALYTIC ACTIVITY</scope>
    <source>
        <strain>Tu 2353</strain>
    </source>
</reference>
<reference key="2">
    <citation type="journal article" date="2001" name="J. Biol. Chem.">
        <title>Deoxysugar methylation during biosynthesis of the antitumor polyketide elloramycin by Streptomyces olivaceus. Characterization of three methyltransferase genes.</title>
        <authorList>
            <person name="Patallo E.P."/>
            <person name="Blanco G."/>
            <person name="Fischer C."/>
            <person name="Brana A.F."/>
            <person name="Rohr J."/>
            <person name="Mendez C."/>
            <person name="Salas J.A."/>
        </authorList>
    </citation>
    <scope>NUCLEOTIDE SEQUENCE [GENOMIC DNA]</scope>
    <source>
        <strain>Tu 2353</strain>
    </source>
</reference>
<reference key="3">
    <citation type="journal article" date="2008" name="Microbiology">
        <title>Biosynthesis of elloramycin in Streptomyces olivaceus requires glycosylation by enzymes encoded outside the aglycon cluster.</title>
        <authorList>
            <person name="Ramos A."/>
            <person name="Lombo F."/>
            <person name="Brana A.F."/>
            <person name="Rohr J."/>
            <person name="Mendez C."/>
            <person name="Salas J.A."/>
        </authorList>
    </citation>
    <scope>NUCLEOTIDE SEQUENCE [GENOMIC DNA]</scope>
    <source>
        <strain>Tu 2353</strain>
    </source>
</reference>
<reference key="4">
    <citation type="journal article" date="2002" name="J. Nat. Prod.">
        <title>Digitoxosyltetracenomycin C and glucosyltetracenomycin C, two novel elloramycin analogues obtained by exploring the sugar donor substrate specificity of glycosyltransferase ElmGT.</title>
        <authorList>
            <person name="Fischer C."/>
            <person name="Rodriguez L."/>
            <person name="Patallo E.P."/>
            <person name="Lipata F."/>
            <person name="Brana A.F."/>
            <person name="Mendez C."/>
            <person name="Salas J.A."/>
            <person name="Rohr J."/>
        </authorList>
    </citation>
    <scope>FUNCTION</scope>
</reference>
<reference key="5">
    <citation type="journal article" date="2009" name="J. Bacteriol.">
        <title>Modulation of deoxysugar transfer by the elloramycin glycosyltransferase ElmGT through site-directed mutagenesis.</title>
        <authorList>
            <person name="Ramos A."/>
            <person name="Olano C."/>
            <person name="Brana A.F."/>
            <person name="Mendez C."/>
            <person name="Salas J.A."/>
        </authorList>
    </citation>
    <scope>FUNCTION</scope>
    <scope>MUTAGENESIS OF LEU-309 AND ASN-312</scope>
</reference>
<proteinExistence type="evidence at protein level"/>
<feature type="chain" id="PRO_0000430712" description="Elloramycin glycosyltransferase ElmGT">
    <location>
        <begin position="1"/>
        <end position="382"/>
    </location>
</feature>
<feature type="mutagenesis site" description="Increased transfer of L-olivose." evidence="3">
    <original>L</original>
    <variation>A</variation>
    <variation>V</variation>
    <variation>Y</variation>
    <location>
        <position position="309"/>
    </location>
</feature>
<feature type="mutagenesis site" description="Increased transfer of L-rhamnose." evidence="3">
    <original>L</original>
    <variation>I</variation>
    <location>
        <position position="309"/>
    </location>
</feature>
<feature type="mutagenesis site" description="Increased transfer of D-boivinose." evidence="3">
    <original>L</original>
    <variation>M</variation>
    <location>
        <position position="309"/>
    </location>
</feature>
<feature type="mutagenesis site" description="Increased transfer of L-olivose." evidence="3">
    <original>N</original>
    <variation>S</variation>
    <location>
        <position position="312"/>
    </location>
</feature>
<feature type="mutagenesis site" description="Increased transfer of L-olivose and decreased affinity for other deoxysugars." evidence="3">
    <original>N</original>
    <variation>T</variation>
    <variation>Q</variation>
    <location>
        <position position="312"/>
    </location>
</feature>
<accession>Q9F2F9</accession>
<gene>
    <name evidence="4" type="primary">elmGT</name>
</gene>
<comment type="function">
    <text evidence="1 2">Glycosyltransferase that transfers an L-rhamnose moiety from dTDP-L-rhamnose to the elloramycin aglycone 8-demethyl-tetracenomycin C (8DMTC) in elloramycin biosynthesis, an antitumor polyketide. Possesses donor substrate flexibility: able to transfer at least 11 different sugars to 8DMTC, such as NDP-D-glucose, as well as NDP-L-digitoxose, including both L- and D-isomeric forms of some sugars.</text>
</comment>
<comment type="catalytic activity">
    <reaction evidence="1">
        <text>8-demethyltetracenomycin C + dTDP-beta-L-rhamnose = 8-demethyl-8-alpha-L-rhamnosyl-tetracenomycin C + dTDP + H(+)</text>
        <dbReference type="Rhea" id="RHEA:42848"/>
        <dbReference type="ChEBI" id="CHEBI:15378"/>
        <dbReference type="ChEBI" id="CHEBI:31144"/>
        <dbReference type="ChEBI" id="CHEBI:57510"/>
        <dbReference type="ChEBI" id="CHEBI:58369"/>
        <dbReference type="ChEBI" id="CHEBI:78283"/>
        <dbReference type="EC" id="2.4.1.331"/>
    </reaction>
</comment>
<comment type="pathway">
    <text evidence="5">Antibiotic biosynthesis.</text>
</comment>
<comment type="similarity">
    <text evidence="5">Belongs to the glycosyltransferase 28 family.</text>
</comment>
<keyword id="KW-0045">Antibiotic biosynthesis</keyword>
<keyword id="KW-0328">Glycosyltransferase</keyword>
<keyword id="KW-0808">Transferase</keyword>
<dbReference type="EC" id="2.4.1.331" evidence="1"/>
<dbReference type="EMBL" id="AJ300305">
    <property type="protein sequence ID" value="CAC16413.2"/>
    <property type="molecule type" value="Genomic_DNA"/>
</dbReference>
<dbReference type="EMBL" id="AM900040">
    <property type="protein sequence ID" value="CAP12607.1"/>
    <property type="molecule type" value="Genomic_DNA"/>
</dbReference>
<dbReference type="SMR" id="Q9F2F9"/>
<dbReference type="CAZy" id="GT1">
    <property type="family name" value="Glycosyltransferase Family 1"/>
</dbReference>
<dbReference type="KEGG" id="ag:CAP12607"/>
<dbReference type="BioCyc" id="MetaCyc:MONOMER-18592"/>
<dbReference type="BRENDA" id="2.4.1.331">
    <property type="organism ID" value="6068"/>
</dbReference>
<dbReference type="GO" id="GO:0016758">
    <property type="term" value="F:hexosyltransferase activity"/>
    <property type="evidence" value="ECO:0000314"/>
    <property type="project" value="UniProtKB"/>
</dbReference>
<dbReference type="GO" id="GO:0008194">
    <property type="term" value="F:UDP-glycosyltransferase activity"/>
    <property type="evidence" value="ECO:0007669"/>
    <property type="project" value="InterPro"/>
</dbReference>
<dbReference type="GO" id="GO:0017000">
    <property type="term" value="P:antibiotic biosynthetic process"/>
    <property type="evidence" value="ECO:0000314"/>
    <property type="project" value="UniProtKB"/>
</dbReference>
<dbReference type="CDD" id="cd03784">
    <property type="entry name" value="GT1_Gtf-like"/>
    <property type="match status" value="1"/>
</dbReference>
<dbReference type="FunFam" id="3.40.50.2000:FF:000072">
    <property type="entry name" value="Glycosyl transferase"/>
    <property type="match status" value="1"/>
</dbReference>
<dbReference type="Gene3D" id="3.40.50.2000">
    <property type="entry name" value="Glycogen Phosphorylase B"/>
    <property type="match status" value="2"/>
</dbReference>
<dbReference type="InterPro" id="IPR010610">
    <property type="entry name" value="EryCIII-like_C"/>
</dbReference>
<dbReference type="InterPro" id="IPR048284">
    <property type="entry name" value="EryCIII-like_N"/>
</dbReference>
<dbReference type="InterPro" id="IPR050426">
    <property type="entry name" value="Glycosyltransferase_28"/>
</dbReference>
<dbReference type="InterPro" id="IPR002213">
    <property type="entry name" value="UDP_glucos_trans"/>
</dbReference>
<dbReference type="PANTHER" id="PTHR48050">
    <property type="entry name" value="STEROL 3-BETA-GLUCOSYLTRANSFERASE"/>
    <property type="match status" value="1"/>
</dbReference>
<dbReference type="PANTHER" id="PTHR48050:SF13">
    <property type="entry name" value="STEROL 3-BETA-GLUCOSYLTRANSFERASE UGT80A2"/>
    <property type="match status" value="1"/>
</dbReference>
<dbReference type="Pfam" id="PF06722">
    <property type="entry name" value="EryCIII-like_C"/>
    <property type="match status" value="1"/>
</dbReference>
<dbReference type="Pfam" id="PF21036">
    <property type="entry name" value="EryCIII-like_N"/>
    <property type="match status" value="1"/>
</dbReference>
<dbReference type="SUPFAM" id="SSF53756">
    <property type="entry name" value="UDP-Glycosyltransferase/glycogen phosphorylase"/>
    <property type="match status" value="1"/>
</dbReference>
<evidence type="ECO:0000269" key="1">
    <source>
    </source>
</evidence>
<evidence type="ECO:0000269" key="2">
    <source>
    </source>
</evidence>
<evidence type="ECO:0000269" key="3">
    <source>
    </source>
</evidence>
<evidence type="ECO:0000303" key="4">
    <source>
    </source>
</evidence>
<evidence type="ECO:0000305" key="5"/>
<evidence type="ECO:0000312" key="6">
    <source>
        <dbReference type="EMBL" id="CAC16413.2"/>
    </source>
</evidence>
<organism evidence="6">
    <name type="scientific">Streptomyces olivaceus</name>
    <dbReference type="NCBI Taxonomy" id="47716"/>
    <lineage>
        <taxon>Bacteria</taxon>
        <taxon>Bacillati</taxon>
        <taxon>Actinomycetota</taxon>
        <taxon>Actinomycetes</taxon>
        <taxon>Kitasatosporales</taxon>
        <taxon>Streptomycetaceae</taxon>
        <taxon>Streptomyces</taxon>
    </lineage>
</organism>
<name>ELMGT_STROV</name>
<protein>
    <recommendedName>
        <fullName evidence="5">Elloramycin glycosyltransferase ElmGT</fullName>
        <ecNumber evidence="1">2.4.1.331</ecNumber>
    </recommendedName>
</protein>